<proteinExistence type="inferred from homology"/>
<comment type="function">
    <text evidence="1">Binds 16S rRNA, required for the assembly of 30S particles and may also be responsible for determining the conformation of the 16S rRNA at the A site.</text>
</comment>
<comment type="cofactor">
    <cofactor evidence="1">
        <name>Zn(2+)</name>
        <dbReference type="ChEBI" id="CHEBI:29105"/>
    </cofactor>
    <text evidence="1">Binds 1 zinc ion per subunit.</text>
</comment>
<comment type="subunit">
    <text evidence="1">Part of the 30S ribosomal subunit. Contacts proteins S3 and S10.</text>
</comment>
<comment type="similarity">
    <text evidence="1">Belongs to the universal ribosomal protein uS14 family. Zinc-binding uS14 subfamily.</text>
</comment>
<protein>
    <recommendedName>
        <fullName evidence="1">Small ribosomal subunit protein uS14</fullName>
    </recommendedName>
    <alternativeName>
        <fullName evidence="2">30S ribosomal protein S14 type Z</fullName>
    </alternativeName>
</protein>
<gene>
    <name evidence="1" type="primary">rpsZ</name>
    <name evidence="1" type="synonym">rpsN</name>
    <name type="ordered locus">Blon_2224</name>
    <name type="ordered locus">BLIJ_2297</name>
</gene>
<dbReference type="EMBL" id="CP001095">
    <property type="protein sequence ID" value="ACJ53283.1"/>
    <property type="molecule type" value="Genomic_DNA"/>
</dbReference>
<dbReference type="EMBL" id="AP010889">
    <property type="protein sequence ID" value="BAJ69874.1"/>
    <property type="molecule type" value="Genomic_DNA"/>
</dbReference>
<dbReference type="RefSeq" id="WP_003814530.1">
    <property type="nucleotide sequence ID" value="NZ_JDTT01000039.1"/>
</dbReference>
<dbReference type="SMR" id="B7GNC7"/>
<dbReference type="KEGG" id="bln:Blon_2224"/>
<dbReference type="KEGG" id="blon:BLIJ_2297"/>
<dbReference type="PATRIC" id="fig|391904.8.peg.2299"/>
<dbReference type="HOGENOM" id="CLU_139869_3_0_11"/>
<dbReference type="Proteomes" id="UP000001360">
    <property type="component" value="Chromosome"/>
</dbReference>
<dbReference type="GO" id="GO:0005737">
    <property type="term" value="C:cytoplasm"/>
    <property type="evidence" value="ECO:0007669"/>
    <property type="project" value="UniProtKB-ARBA"/>
</dbReference>
<dbReference type="GO" id="GO:0015935">
    <property type="term" value="C:small ribosomal subunit"/>
    <property type="evidence" value="ECO:0007669"/>
    <property type="project" value="TreeGrafter"/>
</dbReference>
<dbReference type="GO" id="GO:0019843">
    <property type="term" value="F:rRNA binding"/>
    <property type="evidence" value="ECO:0007669"/>
    <property type="project" value="UniProtKB-UniRule"/>
</dbReference>
<dbReference type="GO" id="GO:0003735">
    <property type="term" value="F:structural constituent of ribosome"/>
    <property type="evidence" value="ECO:0007669"/>
    <property type="project" value="InterPro"/>
</dbReference>
<dbReference type="GO" id="GO:0008270">
    <property type="term" value="F:zinc ion binding"/>
    <property type="evidence" value="ECO:0007669"/>
    <property type="project" value="UniProtKB-UniRule"/>
</dbReference>
<dbReference type="GO" id="GO:0006412">
    <property type="term" value="P:translation"/>
    <property type="evidence" value="ECO:0007669"/>
    <property type="project" value="UniProtKB-UniRule"/>
</dbReference>
<dbReference type="FunFam" id="4.10.830.10:FF:000001">
    <property type="entry name" value="30S ribosomal protein S14 type Z"/>
    <property type="match status" value="1"/>
</dbReference>
<dbReference type="Gene3D" id="4.10.830.10">
    <property type="entry name" value="30s Ribosomal Protein S14, Chain N"/>
    <property type="match status" value="1"/>
</dbReference>
<dbReference type="HAMAP" id="MF_01364_B">
    <property type="entry name" value="Ribosomal_uS14_2_B"/>
    <property type="match status" value="1"/>
</dbReference>
<dbReference type="InterPro" id="IPR001209">
    <property type="entry name" value="Ribosomal_uS14"/>
</dbReference>
<dbReference type="InterPro" id="IPR023053">
    <property type="entry name" value="Ribosomal_uS14_bact"/>
</dbReference>
<dbReference type="InterPro" id="IPR018271">
    <property type="entry name" value="Ribosomal_uS14_CS"/>
</dbReference>
<dbReference type="InterPro" id="IPR043140">
    <property type="entry name" value="Ribosomal_uS14_sf"/>
</dbReference>
<dbReference type="NCBIfam" id="NF005974">
    <property type="entry name" value="PRK08061.1"/>
    <property type="match status" value="1"/>
</dbReference>
<dbReference type="PANTHER" id="PTHR19836">
    <property type="entry name" value="30S RIBOSOMAL PROTEIN S14"/>
    <property type="match status" value="1"/>
</dbReference>
<dbReference type="PANTHER" id="PTHR19836:SF19">
    <property type="entry name" value="SMALL RIBOSOMAL SUBUNIT PROTEIN US14M"/>
    <property type="match status" value="1"/>
</dbReference>
<dbReference type="Pfam" id="PF00253">
    <property type="entry name" value="Ribosomal_S14"/>
    <property type="match status" value="1"/>
</dbReference>
<dbReference type="SUPFAM" id="SSF57716">
    <property type="entry name" value="Glucocorticoid receptor-like (DNA-binding domain)"/>
    <property type="match status" value="1"/>
</dbReference>
<dbReference type="PROSITE" id="PS00527">
    <property type="entry name" value="RIBOSOMAL_S14"/>
    <property type="match status" value="1"/>
</dbReference>
<feature type="chain" id="PRO_1000166759" description="Small ribosomal subunit protein uS14">
    <location>
        <begin position="1"/>
        <end position="61"/>
    </location>
</feature>
<feature type="binding site" evidence="1">
    <location>
        <position position="24"/>
    </location>
    <ligand>
        <name>Zn(2+)</name>
        <dbReference type="ChEBI" id="CHEBI:29105"/>
    </ligand>
</feature>
<feature type="binding site" evidence="1">
    <location>
        <position position="27"/>
    </location>
    <ligand>
        <name>Zn(2+)</name>
        <dbReference type="ChEBI" id="CHEBI:29105"/>
    </ligand>
</feature>
<feature type="binding site" evidence="1">
    <location>
        <position position="40"/>
    </location>
    <ligand>
        <name>Zn(2+)</name>
        <dbReference type="ChEBI" id="CHEBI:29105"/>
    </ligand>
</feature>
<feature type="binding site" evidence="1">
    <location>
        <position position="43"/>
    </location>
    <ligand>
        <name>Zn(2+)</name>
        <dbReference type="ChEBI" id="CHEBI:29105"/>
    </ligand>
</feature>
<keyword id="KW-0479">Metal-binding</keyword>
<keyword id="KW-0687">Ribonucleoprotein</keyword>
<keyword id="KW-0689">Ribosomal protein</keyword>
<keyword id="KW-0694">RNA-binding</keyword>
<keyword id="KW-0699">rRNA-binding</keyword>
<keyword id="KW-0862">Zinc</keyword>
<name>RS14Z_BIFLS</name>
<organism>
    <name type="scientific">Bifidobacterium longum subsp. infantis (strain ATCC 15697 / DSM 20088 / JCM 1222 / NCTC 11817 / S12)</name>
    <dbReference type="NCBI Taxonomy" id="391904"/>
    <lineage>
        <taxon>Bacteria</taxon>
        <taxon>Bacillati</taxon>
        <taxon>Actinomycetota</taxon>
        <taxon>Actinomycetes</taxon>
        <taxon>Bifidobacteriales</taxon>
        <taxon>Bifidobacteriaceae</taxon>
        <taxon>Bifidobacterium</taxon>
    </lineage>
</organism>
<sequence length="61" mass="6920">MAKTALKNKAAGKPKFKVRAYTRCQVCGRPHSVYRKFGLCRICLREKAHRGELPGVTKSSW</sequence>
<accession>B7GNC7</accession>
<accession>E8MN71</accession>
<evidence type="ECO:0000255" key="1">
    <source>
        <dbReference type="HAMAP-Rule" id="MF_01364"/>
    </source>
</evidence>
<evidence type="ECO:0000305" key="2"/>
<reference key="1">
    <citation type="journal article" date="2008" name="Proc. Natl. Acad. Sci. U.S.A.">
        <title>The genome sequence of Bifidobacterium longum subsp. infantis reveals adaptations for milk utilization within the infant microbiome.</title>
        <authorList>
            <person name="Sela D.A."/>
            <person name="Chapman J."/>
            <person name="Adeuya A."/>
            <person name="Kim J.H."/>
            <person name="Chen F."/>
            <person name="Whitehead T.R."/>
            <person name="Lapidus A."/>
            <person name="Rokhsar D.S."/>
            <person name="Lebrilla C.B."/>
            <person name="German J.B."/>
            <person name="Price N.P."/>
            <person name="Richardson P.M."/>
            <person name="Mills D.A."/>
        </authorList>
    </citation>
    <scope>NUCLEOTIDE SEQUENCE [LARGE SCALE GENOMIC DNA]</scope>
    <source>
        <strain>ATCC 15697 / DSM 20088 / JCM 1222 / NCTC 11817 / S12</strain>
    </source>
</reference>
<reference key="2">
    <citation type="journal article" date="2011" name="Nature">
        <title>Bifidobacteria can protect from enteropathogenic infection through production of acetate.</title>
        <authorList>
            <person name="Fukuda S."/>
            <person name="Toh H."/>
            <person name="Hase K."/>
            <person name="Oshima K."/>
            <person name="Nakanishi Y."/>
            <person name="Yoshimura K."/>
            <person name="Tobe T."/>
            <person name="Clarke J.M."/>
            <person name="Topping D.L."/>
            <person name="Suzuki T."/>
            <person name="Taylor T.D."/>
            <person name="Itoh K."/>
            <person name="Kikuchi J."/>
            <person name="Morita H."/>
            <person name="Hattori M."/>
            <person name="Ohno H."/>
        </authorList>
    </citation>
    <scope>NUCLEOTIDE SEQUENCE [LARGE SCALE GENOMIC DNA]</scope>
    <source>
        <strain>ATCC 15697 / DSM 20088 / JCM 1222 / NCTC 11817 / S12</strain>
    </source>
</reference>